<name>GATC_PETMO</name>
<evidence type="ECO:0000255" key="1">
    <source>
        <dbReference type="HAMAP-Rule" id="MF_00122"/>
    </source>
</evidence>
<dbReference type="EC" id="6.3.5.-" evidence="1"/>
<dbReference type="EMBL" id="CP000879">
    <property type="protein sequence ID" value="ABX31428.1"/>
    <property type="molecule type" value="Genomic_DNA"/>
</dbReference>
<dbReference type="RefSeq" id="WP_012208531.1">
    <property type="nucleotide sequence ID" value="NC_010003.1"/>
</dbReference>
<dbReference type="SMR" id="A9BFT2"/>
<dbReference type="STRING" id="403833.Pmob_0703"/>
<dbReference type="KEGG" id="pmo:Pmob_0703"/>
<dbReference type="eggNOG" id="COG0721">
    <property type="taxonomic scope" value="Bacteria"/>
</dbReference>
<dbReference type="HOGENOM" id="CLU_105899_4_2_0"/>
<dbReference type="OrthoDB" id="47632at2"/>
<dbReference type="Proteomes" id="UP000000789">
    <property type="component" value="Chromosome"/>
</dbReference>
<dbReference type="GO" id="GO:0050566">
    <property type="term" value="F:asparaginyl-tRNA synthase (glutamine-hydrolyzing) activity"/>
    <property type="evidence" value="ECO:0007669"/>
    <property type="project" value="RHEA"/>
</dbReference>
<dbReference type="GO" id="GO:0005524">
    <property type="term" value="F:ATP binding"/>
    <property type="evidence" value="ECO:0007669"/>
    <property type="project" value="UniProtKB-KW"/>
</dbReference>
<dbReference type="GO" id="GO:0050567">
    <property type="term" value="F:glutaminyl-tRNA synthase (glutamine-hydrolyzing) activity"/>
    <property type="evidence" value="ECO:0007669"/>
    <property type="project" value="UniProtKB-UniRule"/>
</dbReference>
<dbReference type="GO" id="GO:0070681">
    <property type="term" value="P:glutaminyl-tRNAGln biosynthesis via transamidation"/>
    <property type="evidence" value="ECO:0007669"/>
    <property type="project" value="TreeGrafter"/>
</dbReference>
<dbReference type="GO" id="GO:0006450">
    <property type="term" value="P:regulation of translational fidelity"/>
    <property type="evidence" value="ECO:0007669"/>
    <property type="project" value="InterPro"/>
</dbReference>
<dbReference type="GO" id="GO:0006412">
    <property type="term" value="P:translation"/>
    <property type="evidence" value="ECO:0007669"/>
    <property type="project" value="UniProtKB-UniRule"/>
</dbReference>
<dbReference type="Gene3D" id="1.10.20.60">
    <property type="entry name" value="Glu-tRNAGln amidotransferase C subunit, N-terminal domain"/>
    <property type="match status" value="1"/>
</dbReference>
<dbReference type="HAMAP" id="MF_00122">
    <property type="entry name" value="GatC"/>
    <property type="match status" value="1"/>
</dbReference>
<dbReference type="InterPro" id="IPR036113">
    <property type="entry name" value="Asp/Glu-ADT_sf_sub_c"/>
</dbReference>
<dbReference type="InterPro" id="IPR003837">
    <property type="entry name" value="GatC"/>
</dbReference>
<dbReference type="NCBIfam" id="TIGR00135">
    <property type="entry name" value="gatC"/>
    <property type="match status" value="1"/>
</dbReference>
<dbReference type="PANTHER" id="PTHR15004">
    <property type="entry name" value="GLUTAMYL-TRNA(GLN) AMIDOTRANSFERASE SUBUNIT C, MITOCHONDRIAL"/>
    <property type="match status" value="1"/>
</dbReference>
<dbReference type="PANTHER" id="PTHR15004:SF0">
    <property type="entry name" value="GLUTAMYL-TRNA(GLN) AMIDOTRANSFERASE SUBUNIT C, MITOCHONDRIAL"/>
    <property type="match status" value="1"/>
</dbReference>
<dbReference type="Pfam" id="PF02686">
    <property type="entry name" value="GatC"/>
    <property type="match status" value="1"/>
</dbReference>
<dbReference type="SUPFAM" id="SSF141000">
    <property type="entry name" value="Glu-tRNAGln amidotransferase C subunit"/>
    <property type="match status" value="1"/>
</dbReference>
<proteinExistence type="inferred from homology"/>
<comment type="function">
    <text evidence="1">Allows the formation of correctly charged Asn-tRNA(Asn) or Gln-tRNA(Gln) through the transamidation of misacylated Asp-tRNA(Asn) or Glu-tRNA(Gln) in organisms which lack either or both of asparaginyl-tRNA or glutaminyl-tRNA synthetases. The reaction takes place in the presence of glutamine and ATP through an activated phospho-Asp-tRNA(Asn) or phospho-Glu-tRNA(Gln).</text>
</comment>
<comment type="catalytic activity">
    <reaction evidence="1">
        <text>L-glutamyl-tRNA(Gln) + L-glutamine + ATP + H2O = L-glutaminyl-tRNA(Gln) + L-glutamate + ADP + phosphate + H(+)</text>
        <dbReference type="Rhea" id="RHEA:17521"/>
        <dbReference type="Rhea" id="RHEA-COMP:9681"/>
        <dbReference type="Rhea" id="RHEA-COMP:9684"/>
        <dbReference type="ChEBI" id="CHEBI:15377"/>
        <dbReference type="ChEBI" id="CHEBI:15378"/>
        <dbReference type="ChEBI" id="CHEBI:29985"/>
        <dbReference type="ChEBI" id="CHEBI:30616"/>
        <dbReference type="ChEBI" id="CHEBI:43474"/>
        <dbReference type="ChEBI" id="CHEBI:58359"/>
        <dbReference type="ChEBI" id="CHEBI:78520"/>
        <dbReference type="ChEBI" id="CHEBI:78521"/>
        <dbReference type="ChEBI" id="CHEBI:456216"/>
    </reaction>
</comment>
<comment type="catalytic activity">
    <reaction evidence="1">
        <text>L-aspartyl-tRNA(Asn) + L-glutamine + ATP + H2O = L-asparaginyl-tRNA(Asn) + L-glutamate + ADP + phosphate + 2 H(+)</text>
        <dbReference type="Rhea" id="RHEA:14513"/>
        <dbReference type="Rhea" id="RHEA-COMP:9674"/>
        <dbReference type="Rhea" id="RHEA-COMP:9677"/>
        <dbReference type="ChEBI" id="CHEBI:15377"/>
        <dbReference type="ChEBI" id="CHEBI:15378"/>
        <dbReference type="ChEBI" id="CHEBI:29985"/>
        <dbReference type="ChEBI" id="CHEBI:30616"/>
        <dbReference type="ChEBI" id="CHEBI:43474"/>
        <dbReference type="ChEBI" id="CHEBI:58359"/>
        <dbReference type="ChEBI" id="CHEBI:78515"/>
        <dbReference type="ChEBI" id="CHEBI:78516"/>
        <dbReference type="ChEBI" id="CHEBI:456216"/>
    </reaction>
</comment>
<comment type="subunit">
    <text evidence="1">Heterotrimer of A, B and C subunits.</text>
</comment>
<comment type="similarity">
    <text evidence="1">Belongs to the GatC family.</text>
</comment>
<sequence>MEINTELIKKLKKLSNIELSPSEEERIKKDLNALLEYQKILDKIDVEGIEEMVSPIEFSTSILRKDEVESFESRKKIINNFPENKDGFLAVPGIHVNEEE</sequence>
<reference key="1">
    <citation type="submission" date="2007-11" db="EMBL/GenBank/DDBJ databases">
        <title>Complete sequence of Petroga mobilis SJ95.</title>
        <authorList>
            <consortium name="US DOE Joint Genome Institute"/>
            <person name="Copeland A."/>
            <person name="Lucas S."/>
            <person name="Lapidus A."/>
            <person name="Barry K."/>
            <person name="Glavina del Rio T."/>
            <person name="Dalin E."/>
            <person name="Tice H."/>
            <person name="Pitluck S."/>
            <person name="Meincke L."/>
            <person name="Brettin T."/>
            <person name="Bruce D."/>
            <person name="Detter J.C."/>
            <person name="Han C."/>
            <person name="Kuske C.R."/>
            <person name="Schmutz J."/>
            <person name="Larimer F."/>
            <person name="Land M."/>
            <person name="Hauser L."/>
            <person name="Kyrpides N."/>
            <person name="Mikhailova N."/>
            <person name="Noll K."/>
            <person name="Richardson P."/>
        </authorList>
    </citation>
    <scope>NUCLEOTIDE SEQUENCE [LARGE SCALE GENOMIC DNA]</scope>
    <source>
        <strain>DSM 10674 / SJ95</strain>
    </source>
</reference>
<protein>
    <recommendedName>
        <fullName evidence="1">Aspartyl/glutamyl-tRNA(Asn/Gln) amidotransferase subunit C</fullName>
        <shortName evidence="1">Asp/Glu-ADT subunit C</shortName>
        <ecNumber evidence="1">6.3.5.-</ecNumber>
    </recommendedName>
</protein>
<accession>A9BFT2</accession>
<keyword id="KW-0067">ATP-binding</keyword>
<keyword id="KW-0436">Ligase</keyword>
<keyword id="KW-0547">Nucleotide-binding</keyword>
<keyword id="KW-0648">Protein biosynthesis</keyword>
<feature type="chain" id="PRO_1000076189" description="Aspartyl/glutamyl-tRNA(Asn/Gln) amidotransferase subunit C">
    <location>
        <begin position="1"/>
        <end position="100"/>
    </location>
</feature>
<gene>
    <name evidence="1" type="primary">gatC</name>
    <name type="ordered locus">Pmob_0703</name>
</gene>
<organism>
    <name type="scientific">Petrotoga mobilis (strain DSM 10674 / SJ95)</name>
    <dbReference type="NCBI Taxonomy" id="403833"/>
    <lineage>
        <taxon>Bacteria</taxon>
        <taxon>Thermotogati</taxon>
        <taxon>Thermotogota</taxon>
        <taxon>Thermotogae</taxon>
        <taxon>Petrotogales</taxon>
        <taxon>Petrotogaceae</taxon>
        <taxon>Petrotoga</taxon>
    </lineage>
</organism>